<organism>
    <name type="scientific">Phaeodactylum tricornutum (strain CCAP 1055/1)</name>
    <dbReference type="NCBI Taxonomy" id="556484"/>
    <lineage>
        <taxon>Eukaryota</taxon>
        <taxon>Sar</taxon>
        <taxon>Stramenopiles</taxon>
        <taxon>Ochrophyta</taxon>
        <taxon>Bacillariophyta</taxon>
        <taxon>Bacillariophyceae</taxon>
        <taxon>Bacillariophycidae</taxon>
        <taxon>Naviculales</taxon>
        <taxon>Phaeodactylaceae</taxon>
        <taxon>Phaeodactylum</taxon>
    </lineage>
</organism>
<dbReference type="EC" id="7.4.2.8" evidence="1"/>
<dbReference type="EMBL" id="EF067920">
    <property type="protein sequence ID" value="ABK20663.1"/>
    <property type="molecule type" value="Genomic_DNA"/>
</dbReference>
<dbReference type="RefSeq" id="YP_874440.1">
    <property type="nucleotide sequence ID" value="NC_008588.1"/>
</dbReference>
<dbReference type="SMR" id="A0T0G5"/>
<dbReference type="STRING" id="556484.A0T0G5"/>
<dbReference type="GeneID" id="4524563"/>
<dbReference type="InParanoid" id="A0T0G5"/>
<dbReference type="Proteomes" id="UP000000759">
    <property type="component" value="Chloroplast"/>
</dbReference>
<dbReference type="GO" id="GO:0009570">
    <property type="term" value="C:chloroplast stroma"/>
    <property type="evidence" value="ECO:0007669"/>
    <property type="project" value="UniProtKB-SubCell"/>
</dbReference>
<dbReference type="GO" id="GO:0009535">
    <property type="term" value="C:chloroplast thylakoid membrane"/>
    <property type="evidence" value="ECO:0007669"/>
    <property type="project" value="UniProtKB-SubCell"/>
</dbReference>
<dbReference type="GO" id="GO:0005524">
    <property type="term" value="F:ATP binding"/>
    <property type="evidence" value="ECO:0007669"/>
    <property type="project" value="UniProtKB-UniRule"/>
</dbReference>
<dbReference type="GO" id="GO:0008564">
    <property type="term" value="F:protein-exporting ATPase activity"/>
    <property type="evidence" value="ECO:0007669"/>
    <property type="project" value="UniProtKB-EC"/>
</dbReference>
<dbReference type="GO" id="GO:0065002">
    <property type="term" value="P:intracellular protein transmembrane transport"/>
    <property type="evidence" value="ECO:0007669"/>
    <property type="project" value="UniProtKB-UniRule"/>
</dbReference>
<dbReference type="GO" id="GO:0017038">
    <property type="term" value="P:protein import"/>
    <property type="evidence" value="ECO:0007669"/>
    <property type="project" value="InterPro"/>
</dbReference>
<dbReference type="GO" id="GO:0006605">
    <property type="term" value="P:protein targeting"/>
    <property type="evidence" value="ECO:0007669"/>
    <property type="project" value="UniProtKB-UniRule"/>
</dbReference>
<dbReference type="CDD" id="cd17928">
    <property type="entry name" value="DEXDc_SecA"/>
    <property type="match status" value="1"/>
</dbReference>
<dbReference type="CDD" id="cd18803">
    <property type="entry name" value="SF2_C_secA"/>
    <property type="match status" value="1"/>
</dbReference>
<dbReference type="FunFam" id="3.90.1440.10:FF:000003">
    <property type="entry name" value="Preprotein translocase SecA subunit"/>
    <property type="match status" value="1"/>
</dbReference>
<dbReference type="Gene3D" id="1.10.3060.10">
    <property type="entry name" value="Helical scaffold and wing domains of SecA"/>
    <property type="match status" value="1"/>
</dbReference>
<dbReference type="Gene3D" id="3.40.50.300">
    <property type="entry name" value="P-loop containing nucleotide triphosphate hydrolases"/>
    <property type="match status" value="2"/>
</dbReference>
<dbReference type="Gene3D" id="3.90.1440.10">
    <property type="entry name" value="SecA, preprotein cross-linking domain"/>
    <property type="match status" value="1"/>
</dbReference>
<dbReference type="HAMAP" id="MF_01382">
    <property type="entry name" value="SecA"/>
    <property type="match status" value="1"/>
</dbReference>
<dbReference type="InterPro" id="IPR014001">
    <property type="entry name" value="Helicase_ATP-bd"/>
</dbReference>
<dbReference type="InterPro" id="IPR027417">
    <property type="entry name" value="P-loop_NTPase"/>
</dbReference>
<dbReference type="InterPro" id="IPR000185">
    <property type="entry name" value="SecA"/>
</dbReference>
<dbReference type="InterPro" id="IPR020937">
    <property type="entry name" value="SecA_CS"/>
</dbReference>
<dbReference type="InterPro" id="IPR011115">
    <property type="entry name" value="SecA_DEAD"/>
</dbReference>
<dbReference type="InterPro" id="IPR014018">
    <property type="entry name" value="SecA_motor_DEAD"/>
</dbReference>
<dbReference type="InterPro" id="IPR011130">
    <property type="entry name" value="SecA_preprotein_X-link_dom"/>
</dbReference>
<dbReference type="InterPro" id="IPR044722">
    <property type="entry name" value="SecA_SF2_C"/>
</dbReference>
<dbReference type="InterPro" id="IPR011116">
    <property type="entry name" value="SecA_Wing/Scaffold"/>
</dbReference>
<dbReference type="InterPro" id="IPR036266">
    <property type="entry name" value="SecA_Wing/Scaffold_sf"/>
</dbReference>
<dbReference type="InterPro" id="IPR036670">
    <property type="entry name" value="SecA_X-link_sf"/>
</dbReference>
<dbReference type="NCBIfam" id="TIGR00963">
    <property type="entry name" value="secA"/>
    <property type="match status" value="1"/>
</dbReference>
<dbReference type="PANTHER" id="PTHR30612:SF0">
    <property type="entry name" value="CHLOROPLAST PROTEIN-TRANSPORTING ATPASE"/>
    <property type="match status" value="1"/>
</dbReference>
<dbReference type="PANTHER" id="PTHR30612">
    <property type="entry name" value="SECA INNER MEMBRANE COMPONENT OF SEC PROTEIN SECRETION SYSTEM"/>
    <property type="match status" value="1"/>
</dbReference>
<dbReference type="Pfam" id="PF21090">
    <property type="entry name" value="P-loop_SecA"/>
    <property type="match status" value="1"/>
</dbReference>
<dbReference type="Pfam" id="PF07517">
    <property type="entry name" value="SecA_DEAD"/>
    <property type="match status" value="1"/>
</dbReference>
<dbReference type="Pfam" id="PF01043">
    <property type="entry name" value="SecA_PP_bind"/>
    <property type="match status" value="1"/>
</dbReference>
<dbReference type="Pfam" id="PF07516">
    <property type="entry name" value="SecA_SW"/>
    <property type="match status" value="1"/>
</dbReference>
<dbReference type="PRINTS" id="PR00906">
    <property type="entry name" value="SECA"/>
</dbReference>
<dbReference type="SMART" id="SM00957">
    <property type="entry name" value="SecA_DEAD"/>
    <property type="match status" value="1"/>
</dbReference>
<dbReference type="SMART" id="SM00958">
    <property type="entry name" value="SecA_PP_bind"/>
    <property type="match status" value="1"/>
</dbReference>
<dbReference type="SUPFAM" id="SSF81886">
    <property type="entry name" value="Helical scaffold and wing domains of SecA"/>
    <property type="match status" value="1"/>
</dbReference>
<dbReference type="SUPFAM" id="SSF52540">
    <property type="entry name" value="P-loop containing nucleoside triphosphate hydrolases"/>
    <property type="match status" value="2"/>
</dbReference>
<dbReference type="SUPFAM" id="SSF81767">
    <property type="entry name" value="Pre-protein crosslinking domain of SecA"/>
    <property type="match status" value="1"/>
</dbReference>
<dbReference type="PROSITE" id="PS01312">
    <property type="entry name" value="SECA"/>
    <property type="match status" value="1"/>
</dbReference>
<dbReference type="PROSITE" id="PS51196">
    <property type="entry name" value="SECA_MOTOR_DEAD"/>
    <property type="match status" value="1"/>
</dbReference>
<gene>
    <name evidence="1" type="primary">secA</name>
</gene>
<keyword id="KW-0067">ATP-binding</keyword>
<keyword id="KW-0150">Chloroplast</keyword>
<keyword id="KW-0472">Membrane</keyword>
<keyword id="KW-0547">Nucleotide-binding</keyword>
<keyword id="KW-0934">Plastid</keyword>
<keyword id="KW-0653">Protein transport</keyword>
<keyword id="KW-1185">Reference proteome</keyword>
<keyword id="KW-0793">Thylakoid</keyword>
<keyword id="KW-1278">Translocase</keyword>
<keyword id="KW-0811">Translocation</keyword>
<keyword id="KW-0813">Transport</keyword>
<accession>A0T0G5</accession>
<accession>Q5D709</accession>
<comment type="function">
    <text evidence="1">Has a central role in coupling the hydrolysis of ATP to the transfer of proteins across the thylakoid membrane.</text>
</comment>
<comment type="catalytic activity">
    <reaction evidence="1">
        <text>ATP + H2O + cellular proteinSide 1 = ADP + phosphate + cellular proteinSide 2.</text>
        <dbReference type="EC" id="7.4.2.8"/>
    </reaction>
</comment>
<comment type="subcellular location">
    <subcellularLocation>
        <location evidence="1">Plastid</location>
        <location evidence="1">Chloroplast stroma</location>
    </subcellularLocation>
    <subcellularLocation>
        <location evidence="1">Plastid</location>
        <location evidence="1">Chloroplast thylakoid membrane</location>
        <topology evidence="1">Peripheral membrane protein</topology>
    </subcellularLocation>
    <text evidence="1">A minor fraction is associated with the chloroplast thylakoid membrane.</text>
</comment>
<comment type="similarity">
    <text evidence="1">Belongs to the SecA family.</text>
</comment>
<evidence type="ECO:0000255" key="1">
    <source>
        <dbReference type="HAMAP-Rule" id="MF_01382"/>
    </source>
</evidence>
<proteinExistence type="inferred from homology"/>
<reference key="1">
    <citation type="journal article" date="2007" name="Mol. Genet. Genomics">
        <title>Chloroplast genomes of the diatoms Phaeodactylum tricornutum and Thalassiosira pseudonana: comparison with other plastid genomes of the red lineage.</title>
        <authorList>
            <person name="Oudot-Le Secq M.-P."/>
            <person name="Grimwood J."/>
            <person name="Shapiro H."/>
            <person name="Armbrust E.V."/>
            <person name="Bowler C."/>
            <person name="Green B.R."/>
        </authorList>
    </citation>
    <scope>NUCLEOTIDE SEQUENCE [LARGE SCALE GENOMIC DNA]</scope>
    <source>
        <strain>CCAP 1055/1</strain>
    </source>
</reference>
<sequence length="886" mass="102221">MLKNPFNNNSLINKYQSLINQINTLEDELKTLTDSELRATSFKLKKQYAESKNLESLIPKSFALTREASLRTLGLRHFDVQLIGGLVLNDKKIAEMKTGEGKTLVATLPAYLNALTEKGVHIVTVNDYLANRDQVSMGQIYRFLGLNTGLIQDGMPNFDRRENYKADITYVTNYEVTFDFLRDNMALNLKDVVLRPFNYCIIDEVDSILIDEAQTPLIISNNIQTPIEKYIVAAEITDYLELNTHYKVDEKNKNVILTEDGSKQIEQILSVQDLYDPRDPWIPYIINALKANALYFNNVHYIVQNNRIIIVDEFTGRIMADRRWGDGLHQAIEAKEKLPIRQKTETVAAITYQNFFLLYPKLSGMTGTGKTAETEFEKIYNLSVEQIPTERPTQRKDLPDLIYKDQFSKWNAVAQNCNQIAKIGQPILVGTTTVEKSEMLAQLLSEYKLSYQILNAKPENVRRESEIVAQAGKKGSITIATNMAGRGTDIILGGNINFKIQKKLYDILTLVKNFKRSKKENIFSSSLLSQFEGSSQKFLSVLVSLSNDQKFLKLSDLDILKILRENDCISIPITSYQCSIRYLIDELITYNKKHQEQENQIVKNLGGLYIIGTERNDSRRVDNQLRGRCGRQGDPGTSRFFLSLDDNLLRLFGGSKIQNFMQTQIPDDSPLESEFITKSLDSAQERVEERAYQQRKNLFDYDDVLNKQRNIVYHERRNILESISVQKNIFAYGEQIITELLIELKEDKSCNIEATNLIENLFGRNLVLNYIKTSSLSISNLDLSELKIYLFNEFWLTYQSKITELSIYGEGIIENLERSIILINTDRIWREHLQKMTLLREAVGWRGYGQRNPLYEYKQDAFYMFETREELLRHLVIYDLLRSSIL</sequence>
<feature type="chain" id="PRO_0000318488" description="Protein translocase subunit SecA">
    <location>
        <begin position="1"/>
        <end position="886"/>
    </location>
</feature>
<feature type="binding site" evidence="1">
    <location>
        <position position="81"/>
    </location>
    <ligand>
        <name>ATP</name>
        <dbReference type="ChEBI" id="CHEBI:30616"/>
    </ligand>
</feature>
<feature type="binding site" evidence="1">
    <location>
        <begin position="99"/>
        <end position="103"/>
    </location>
    <ligand>
        <name>ATP</name>
        <dbReference type="ChEBI" id="CHEBI:30616"/>
    </ligand>
</feature>
<feature type="binding site" evidence="1">
    <location>
        <position position="489"/>
    </location>
    <ligand>
        <name>ATP</name>
        <dbReference type="ChEBI" id="CHEBI:30616"/>
    </ligand>
</feature>
<feature type="sequence variant" description="In strain: UTEX 646 / Bohlin.">
    <original>S</original>
    <variation>G</variation>
    <location>
        <position position="35"/>
    </location>
</feature>
<feature type="sequence variant" description="In strain: UTEX 646 / Bohlin.">
    <original>QD</original>
    <variation>HE</variation>
    <location>
        <begin position="152"/>
        <end position="153"/>
    </location>
</feature>
<feature type="sequence variant" description="In strain: UTEX 646 / Bohlin.">
    <original>D</original>
    <variation>G</variation>
    <location>
        <position position="183"/>
    </location>
</feature>
<feature type="sequence variant" description="In strain: UTEX 646 / Bohlin.">
    <original>D</original>
    <variation>G</variation>
    <location>
        <position position="211"/>
    </location>
</feature>
<feature type="sequence variant" description="In strain: UTEX 646 / Bohlin.">
    <original>T</original>
    <variation>A</variation>
    <location>
        <position position="374"/>
    </location>
</feature>
<geneLocation type="chloroplast"/>
<protein>
    <recommendedName>
        <fullName evidence="1">Protein translocase subunit SecA</fullName>
        <ecNumber evidence="1">7.4.2.8</ecNumber>
    </recommendedName>
</protein>
<name>SECA_PHATC</name>